<reference key="1">
    <citation type="journal article" date="2003" name="DNA Res.">
        <title>Complete sequence and analysis of the plastid genome of the unicellular red alga Cyanidioschyzon merolae.</title>
        <authorList>
            <person name="Ohta N."/>
            <person name="Matsuzaki M."/>
            <person name="Misumi O."/>
            <person name="Miyagishima S.-Y."/>
            <person name="Nozaki H."/>
            <person name="Tanaka K."/>
            <person name="Shin-i T."/>
            <person name="Kohara Y."/>
            <person name="Kuroiwa T."/>
        </authorList>
    </citation>
    <scope>NUCLEOTIDE SEQUENCE [LARGE SCALE GENOMIC DNA]</scope>
    <source>
        <strain>NIES-3377 / 10D</strain>
    </source>
</reference>
<keyword id="KW-0150">Chloroplast</keyword>
<keyword id="KW-0472">Membrane</keyword>
<keyword id="KW-0602">Photosynthesis</keyword>
<keyword id="KW-0604">Photosystem II</keyword>
<keyword id="KW-0934">Plastid</keyword>
<keyword id="KW-0674">Reaction center</keyword>
<keyword id="KW-1185">Reference proteome</keyword>
<keyword id="KW-0793">Thylakoid</keyword>
<keyword id="KW-0812">Transmembrane</keyword>
<keyword id="KW-1133">Transmembrane helix</keyword>
<accession>Q85FQ4</accession>
<evidence type="ECO:0000255" key="1">
    <source>
        <dbReference type="HAMAP-Rule" id="MF_01317"/>
    </source>
</evidence>
<feature type="chain" id="PRO_0000219707" description="Photosystem II reaction center protein L">
    <location>
        <begin position="1"/>
        <end position="38"/>
    </location>
</feature>
<feature type="transmembrane region" description="Helical" evidence="1">
    <location>
        <begin position="17"/>
        <end position="37"/>
    </location>
</feature>
<protein>
    <recommendedName>
        <fullName evidence="1">Photosystem II reaction center protein L</fullName>
        <shortName evidence="1">PSII-L</shortName>
    </recommendedName>
</protein>
<name>PSBL_CYAM1</name>
<geneLocation type="chloroplast"/>
<gene>
    <name evidence="1" type="primary">psbL</name>
</gene>
<dbReference type="EMBL" id="AB002583">
    <property type="protein sequence ID" value="BAC76291.1"/>
    <property type="molecule type" value="Genomic_DNA"/>
</dbReference>
<dbReference type="RefSeq" id="NP_849129.1">
    <property type="nucleotide sequence ID" value="NC_004799.1"/>
</dbReference>
<dbReference type="SMR" id="Q85FQ4"/>
<dbReference type="STRING" id="280699.Q85FQ4"/>
<dbReference type="EnsemblPlants" id="CMV229CT">
    <property type="protein sequence ID" value="CMV229CT"/>
    <property type="gene ID" value="CMV229C"/>
</dbReference>
<dbReference type="GeneID" id="844956"/>
<dbReference type="Gramene" id="CMV229CT">
    <property type="protein sequence ID" value="CMV229CT"/>
    <property type="gene ID" value="CMV229C"/>
</dbReference>
<dbReference type="KEGG" id="cme:CymeCp197"/>
<dbReference type="eggNOG" id="ENOG502SFCU">
    <property type="taxonomic scope" value="Eukaryota"/>
</dbReference>
<dbReference type="HOGENOM" id="CLU_214425_0_0_1"/>
<dbReference type="Proteomes" id="UP000007014">
    <property type="component" value="Chloroplast"/>
</dbReference>
<dbReference type="GO" id="GO:0009535">
    <property type="term" value="C:chloroplast thylakoid membrane"/>
    <property type="evidence" value="ECO:0007669"/>
    <property type="project" value="UniProtKB-SubCell"/>
</dbReference>
<dbReference type="GO" id="GO:0009539">
    <property type="term" value="C:photosystem II reaction center"/>
    <property type="evidence" value="ECO:0007669"/>
    <property type="project" value="InterPro"/>
</dbReference>
<dbReference type="GO" id="GO:0015979">
    <property type="term" value="P:photosynthesis"/>
    <property type="evidence" value="ECO:0007669"/>
    <property type="project" value="UniProtKB-UniRule"/>
</dbReference>
<dbReference type="HAMAP" id="MF_01317">
    <property type="entry name" value="PSII_PsbL"/>
    <property type="match status" value="1"/>
</dbReference>
<dbReference type="InterPro" id="IPR003372">
    <property type="entry name" value="PSII_PsbL"/>
</dbReference>
<dbReference type="InterPro" id="IPR037266">
    <property type="entry name" value="PSII_PsbL_sf"/>
</dbReference>
<dbReference type="NCBIfam" id="NF001972">
    <property type="entry name" value="PRK00753.1"/>
    <property type="match status" value="1"/>
</dbReference>
<dbReference type="Pfam" id="PF02419">
    <property type="entry name" value="PsbL"/>
    <property type="match status" value="1"/>
</dbReference>
<dbReference type="SUPFAM" id="SSF161017">
    <property type="entry name" value="Photosystem II reaction center protein L, PsbL"/>
    <property type="match status" value="1"/>
</dbReference>
<comment type="function">
    <text evidence="1">One of the components of the core complex of photosystem II (PSII). PSII is a light-driven water:plastoquinone oxidoreductase that uses light energy to abstract electrons from H(2)O, generating O(2) and a proton gradient subsequently used for ATP formation. It consists of a core antenna complex that captures photons, and an electron transfer chain that converts photonic excitation into a charge separation. This subunit is found at the monomer-monomer interface and is required for correct PSII assembly and/or dimerization.</text>
</comment>
<comment type="subunit">
    <text evidence="1">PSII is composed of 1 copy each of membrane proteins PsbA, PsbB, PsbC, PsbD, PsbE, PsbF, PsbH, PsbI, PsbJ, PsbK, PsbL, PsbM, PsbT, PsbX, PsbY, PsbZ, Psb30/Ycf12, at least 3 peripheral proteins of the oxygen-evolving complex and a large number of cofactors. It forms dimeric complexes.</text>
</comment>
<comment type="subcellular location">
    <subcellularLocation>
        <location evidence="1">Plastid</location>
        <location evidence="1">Chloroplast thylakoid membrane</location>
        <topology evidence="1">Single-pass membrane protein</topology>
    </subcellularLocation>
</comment>
<comment type="similarity">
    <text evidence="1">Belongs to the PsbL family.</text>
</comment>
<sequence length="38" mass="4381">MSGPNPNKQPVELNRTSLYWGLLCIFVLAILFSSYFFN</sequence>
<organism>
    <name type="scientific">Cyanidioschyzon merolae (strain NIES-3377 / 10D)</name>
    <name type="common">Unicellular red alga</name>
    <dbReference type="NCBI Taxonomy" id="280699"/>
    <lineage>
        <taxon>Eukaryota</taxon>
        <taxon>Rhodophyta</taxon>
        <taxon>Bangiophyceae</taxon>
        <taxon>Cyanidiales</taxon>
        <taxon>Cyanidiaceae</taxon>
        <taxon>Cyanidioschyzon</taxon>
    </lineage>
</organism>
<proteinExistence type="inferred from homology"/>